<evidence type="ECO:0000250" key="1">
    <source>
        <dbReference type="UniProtKB" id="Q6S5J6"/>
    </source>
</evidence>
<evidence type="ECO:0000255" key="2"/>
<evidence type="ECO:0000255" key="3">
    <source>
        <dbReference type="PROSITE-ProRule" id="PRU00084"/>
    </source>
</evidence>
<evidence type="ECO:0000269" key="4">
    <source>
    </source>
</evidence>
<evidence type="ECO:0000269" key="5">
    <source>
    </source>
</evidence>
<evidence type="ECO:0000269" key="6">
    <source>
    </source>
</evidence>
<evidence type="ECO:0000269" key="7">
    <source>
    </source>
</evidence>
<evidence type="ECO:0000269" key="8">
    <source>
    </source>
</evidence>
<evidence type="ECO:0000269" key="9">
    <source>
    </source>
</evidence>
<evidence type="ECO:0000269" key="10">
    <source>
    </source>
</evidence>
<evidence type="ECO:0000269" key="11">
    <source>
    </source>
</evidence>
<evidence type="ECO:0000269" key="12">
    <source>
    </source>
</evidence>
<evidence type="ECO:0000269" key="13">
    <source>
    </source>
</evidence>
<evidence type="ECO:0000269" key="14">
    <source>
    </source>
</evidence>
<evidence type="ECO:0000269" key="15">
    <source>
    </source>
</evidence>
<evidence type="ECO:0000269" key="16">
    <source>
    </source>
</evidence>
<evidence type="ECO:0000269" key="17">
    <source>
    </source>
</evidence>
<evidence type="ECO:0000303" key="18">
    <source>
    </source>
</evidence>
<evidence type="ECO:0000303" key="19">
    <source>
    </source>
</evidence>
<evidence type="ECO:0000305" key="20"/>
<evidence type="ECO:0007744" key="21">
    <source>
        <dbReference type="PDB" id="5D68"/>
    </source>
</evidence>
<evidence type="ECO:0007829" key="22">
    <source>
        <dbReference type="PDB" id="4DX8"/>
    </source>
</evidence>
<evidence type="ECO:0007829" key="23">
    <source>
        <dbReference type="PDB" id="4HDO"/>
    </source>
</evidence>
<evidence type="ECO:0007829" key="24">
    <source>
        <dbReference type="PDB" id="4HDQ"/>
    </source>
</evidence>
<evidence type="ECO:0007829" key="25">
    <source>
        <dbReference type="PDB" id="4JIF"/>
    </source>
</evidence>
<evidence type="ECO:0007829" key="26">
    <source>
        <dbReference type="PDB" id="4TKN"/>
    </source>
</evidence>
<evidence type="ECO:0007829" key="27">
    <source>
        <dbReference type="PDB" id="5D68"/>
    </source>
</evidence>
<evidence type="ECO:0007829" key="28">
    <source>
        <dbReference type="PDB" id="6UZK"/>
    </source>
</evidence>
<gene>
    <name type="primary">KRIT1</name>
    <name type="synonym">CCM1</name>
</gene>
<proteinExistence type="evidence at protein level"/>
<dbReference type="EMBL" id="U90268">
    <property type="protein sequence ID" value="AAB58582.1"/>
    <property type="molecule type" value="mRNA"/>
</dbReference>
<dbReference type="EMBL" id="U90269">
    <property type="protein sequence ID" value="AAC01535.1"/>
    <property type="molecule type" value="Genomic_DNA"/>
</dbReference>
<dbReference type="EMBL" id="AF310133">
    <property type="protein sequence ID" value="AAG47774.1"/>
    <property type="molecule type" value="mRNA"/>
</dbReference>
<dbReference type="EMBL" id="AF296765">
    <property type="protein sequence ID" value="AAG10220.2"/>
    <property type="molecule type" value="mRNA"/>
</dbReference>
<dbReference type="EMBL" id="AF388384">
    <property type="protein sequence ID" value="AAM19465.1"/>
    <property type="molecule type" value="mRNA"/>
</dbReference>
<dbReference type="EMBL" id="AY380057">
    <property type="protein sequence ID" value="AAQ94072.1"/>
    <property type="molecule type" value="mRNA"/>
</dbReference>
<dbReference type="EMBL" id="AK055305">
    <property type="protein sequence ID" value="BAG51497.1"/>
    <property type="molecule type" value="mRNA"/>
</dbReference>
<dbReference type="EMBL" id="AC000120">
    <property type="protein sequence ID" value="AAS07420.1"/>
    <property type="molecule type" value="Genomic_DNA"/>
</dbReference>
<dbReference type="EMBL" id="BC094684">
    <property type="protein sequence ID" value="AAH94684.1"/>
    <property type="molecule type" value="mRNA"/>
</dbReference>
<dbReference type="EMBL" id="BC098442">
    <property type="protein sequence ID" value="AAH98442.1"/>
    <property type="molecule type" value="mRNA"/>
</dbReference>
<dbReference type="EMBL" id="AJ294850">
    <property type="protein sequence ID" value="CAC17608.1"/>
    <property type="molecule type" value="mRNA"/>
</dbReference>
<dbReference type="EMBL" id="AY993945">
    <property type="protein sequence ID" value="AAY25568.1"/>
    <property type="molecule type" value="Genomic_DNA"/>
</dbReference>
<dbReference type="CCDS" id="CCDS34679.1">
    <molecule id="O00522-3"/>
</dbReference>
<dbReference type="CCDS" id="CCDS5624.1">
    <molecule id="O00522-1"/>
</dbReference>
<dbReference type="RefSeq" id="NP_001013424.1">
    <molecule id="O00522-3"/>
    <property type="nucleotide sequence ID" value="NM_001013406.2"/>
</dbReference>
<dbReference type="RefSeq" id="NP_001337598.1">
    <molecule id="O00522-3"/>
    <property type="nucleotide sequence ID" value="NM_001350669.1"/>
</dbReference>
<dbReference type="RefSeq" id="NP_001337599.1">
    <molecule id="O00522-3"/>
    <property type="nucleotide sequence ID" value="NM_001350670.1"/>
</dbReference>
<dbReference type="RefSeq" id="NP_001337601.1">
    <molecule id="O00522-1"/>
    <property type="nucleotide sequence ID" value="NM_001350672.1"/>
</dbReference>
<dbReference type="RefSeq" id="NP_001337602.1">
    <molecule id="O00522-1"/>
    <property type="nucleotide sequence ID" value="NM_001350673.1"/>
</dbReference>
<dbReference type="RefSeq" id="NP_001337603.1">
    <molecule id="O00522-1"/>
    <property type="nucleotide sequence ID" value="NM_001350674.1"/>
</dbReference>
<dbReference type="RefSeq" id="NP_001337604.1">
    <molecule id="O00522-1"/>
    <property type="nucleotide sequence ID" value="NM_001350675.1"/>
</dbReference>
<dbReference type="RefSeq" id="NP_001337605.1">
    <molecule id="O00522-1"/>
    <property type="nucleotide sequence ID" value="NM_001350676.1"/>
</dbReference>
<dbReference type="RefSeq" id="NP_001337606.1">
    <molecule id="O00522-1"/>
    <property type="nucleotide sequence ID" value="NM_001350677.1"/>
</dbReference>
<dbReference type="RefSeq" id="NP_001337607.1">
    <molecule id="O00522-1"/>
    <property type="nucleotide sequence ID" value="NM_001350678.1"/>
</dbReference>
<dbReference type="RefSeq" id="NP_001337608.1">
    <molecule id="O00522-1"/>
    <property type="nucleotide sequence ID" value="NM_001350679.1"/>
</dbReference>
<dbReference type="RefSeq" id="NP_001337609.1">
    <molecule id="O00522-1"/>
    <property type="nucleotide sequence ID" value="NM_001350680.1"/>
</dbReference>
<dbReference type="RefSeq" id="NP_001337610.1">
    <molecule id="O00522-1"/>
    <property type="nucleotide sequence ID" value="NM_001350681.1"/>
</dbReference>
<dbReference type="RefSeq" id="NP_001337611.1">
    <molecule id="O00522-1"/>
    <property type="nucleotide sequence ID" value="NM_001350682.1"/>
</dbReference>
<dbReference type="RefSeq" id="NP_001337612.1">
    <molecule id="O00522-1"/>
    <property type="nucleotide sequence ID" value="NM_001350683.1"/>
</dbReference>
<dbReference type="RefSeq" id="NP_001337613.1">
    <molecule id="O00522-1"/>
    <property type="nucleotide sequence ID" value="NM_001350684.1"/>
</dbReference>
<dbReference type="RefSeq" id="NP_001337614.1">
    <molecule id="O00522-1"/>
    <property type="nucleotide sequence ID" value="NM_001350685.1"/>
</dbReference>
<dbReference type="RefSeq" id="NP_001337615.1">
    <molecule id="O00522-1"/>
    <property type="nucleotide sequence ID" value="NM_001350686.1"/>
</dbReference>
<dbReference type="RefSeq" id="NP_001337616.1">
    <molecule id="O00522-1"/>
    <property type="nucleotide sequence ID" value="NM_001350687.1"/>
</dbReference>
<dbReference type="RefSeq" id="NP_001337617.1">
    <molecule id="O00522-1"/>
    <property type="nucleotide sequence ID" value="NM_001350688.1"/>
</dbReference>
<dbReference type="RefSeq" id="NP_001337618.1">
    <molecule id="O00522-1"/>
    <property type="nucleotide sequence ID" value="NM_001350689.1"/>
</dbReference>
<dbReference type="RefSeq" id="NP_001337619.1">
    <molecule id="O00522-1"/>
    <property type="nucleotide sequence ID" value="NM_001350690.1"/>
</dbReference>
<dbReference type="RefSeq" id="NP_001337620.1">
    <molecule id="O00522-1"/>
    <property type="nucleotide sequence ID" value="NM_001350691.1"/>
</dbReference>
<dbReference type="RefSeq" id="NP_001337621.1">
    <molecule id="O00522-1"/>
    <property type="nucleotide sequence ID" value="NM_001350692.1"/>
</dbReference>
<dbReference type="RefSeq" id="NP_001337622.1">
    <molecule id="O00522-1"/>
    <property type="nucleotide sequence ID" value="NM_001350693.1"/>
</dbReference>
<dbReference type="RefSeq" id="NP_001337623.1">
    <molecule id="O00522-1"/>
    <property type="nucleotide sequence ID" value="NM_001350694.1"/>
</dbReference>
<dbReference type="RefSeq" id="NP_001337624.1">
    <molecule id="O00522-1"/>
    <property type="nucleotide sequence ID" value="NM_001350695.1"/>
</dbReference>
<dbReference type="RefSeq" id="NP_001337625.1">
    <molecule id="O00522-1"/>
    <property type="nucleotide sequence ID" value="NM_001350696.1"/>
</dbReference>
<dbReference type="RefSeq" id="NP_001337626.1">
    <molecule id="O00522-1"/>
    <property type="nucleotide sequence ID" value="NM_001350697.1"/>
</dbReference>
<dbReference type="RefSeq" id="NP_004903.2">
    <molecule id="O00522-1"/>
    <property type="nucleotide sequence ID" value="NM_004912.3"/>
</dbReference>
<dbReference type="RefSeq" id="NP_919436.1">
    <molecule id="O00522-1"/>
    <property type="nucleotide sequence ID" value="NM_194454.3"/>
</dbReference>
<dbReference type="RefSeq" id="NP_919437.1">
    <molecule id="O00522-1"/>
    <property type="nucleotide sequence ID" value="NM_194455.1"/>
</dbReference>
<dbReference type="RefSeq" id="NP_919438.1">
    <molecule id="O00522-1"/>
    <property type="nucleotide sequence ID" value="NM_194456.1"/>
</dbReference>
<dbReference type="RefSeq" id="XP_005250717.1">
    <property type="nucleotide sequence ID" value="XM_005250660.3"/>
</dbReference>
<dbReference type="RefSeq" id="XP_005250719.1">
    <property type="nucleotide sequence ID" value="XM_005250662.3"/>
</dbReference>
<dbReference type="RefSeq" id="XP_005250722.1">
    <property type="nucleotide sequence ID" value="XM_005250665.3"/>
</dbReference>
<dbReference type="RefSeq" id="XP_005250723.1">
    <property type="nucleotide sequence ID" value="XM_005250666.3"/>
</dbReference>
<dbReference type="RefSeq" id="XP_005250724.1">
    <property type="nucleotide sequence ID" value="XM_005250667.2"/>
</dbReference>
<dbReference type="RefSeq" id="XP_005250725.1">
    <property type="nucleotide sequence ID" value="XM_005250668.3"/>
</dbReference>
<dbReference type="RefSeq" id="XP_005250726.1">
    <property type="nucleotide sequence ID" value="XM_005250669.3"/>
</dbReference>
<dbReference type="RefSeq" id="XP_006716224.1">
    <property type="nucleotide sequence ID" value="XM_006716161.3"/>
</dbReference>
<dbReference type="RefSeq" id="XP_006716225.1">
    <property type="nucleotide sequence ID" value="XM_006716162.3"/>
</dbReference>
<dbReference type="RefSeq" id="XP_006716226.1">
    <property type="nucleotide sequence ID" value="XM_006716163.3"/>
</dbReference>
<dbReference type="RefSeq" id="XP_011514953.1">
    <property type="nucleotide sequence ID" value="XM_011516651.2"/>
</dbReference>
<dbReference type="RefSeq" id="XP_011514955.1">
    <property type="nucleotide sequence ID" value="XM_011516653.2"/>
</dbReference>
<dbReference type="RefSeq" id="XP_011514956.1">
    <property type="nucleotide sequence ID" value="XM_011516654.2"/>
</dbReference>
<dbReference type="RefSeq" id="XP_011514957.1">
    <property type="nucleotide sequence ID" value="XM_011516655.2"/>
</dbReference>
<dbReference type="RefSeq" id="XP_011514958.1">
    <property type="nucleotide sequence ID" value="XM_011516656.2"/>
</dbReference>
<dbReference type="RefSeq" id="XP_011514959.1">
    <property type="nucleotide sequence ID" value="XM_011516657.2"/>
</dbReference>
<dbReference type="RefSeq" id="XP_011514960.1">
    <property type="nucleotide sequence ID" value="XM_011516658.2"/>
</dbReference>
<dbReference type="RefSeq" id="XP_011514961.1">
    <property type="nucleotide sequence ID" value="XM_011516659.2"/>
</dbReference>
<dbReference type="RefSeq" id="XP_011514962.1">
    <property type="nucleotide sequence ID" value="XM_011516660.2"/>
</dbReference>
<dbReference type="RefSeq" id="XP_011514963.1">
    <property type="nucleotide sequence ID" value="XM_011516661.2"/>
</dbReference>
<dbReference type="RefSeq" id="XP_016868244.1">
    <property type="nucleotide sequence ID" value="XM_017012755.1"/>
</dbReference>
<dbReference type="RefSeq" id="XP_016868245.1">
    <property type="nucleotide sequence ID" value="XM_017012756.1"/>
</dbReference>
<dbReference type="RefSeq" id="XP_016868246.1">
    <property type="nucleotide sequence ID" value="XM_017012757.1"/>
</dbReference>
<dbReference type="PDB" id="3U7D">
    <property type="method" value="X-ray"/>
    <property type="resolution" value="2.49 A"/>
    <property type="chains" value="A/C=417-736"/>
</dbReference>
<dbReference type="PDB" id="4DX8">
    <property type="method" value="X-ray"/>
    <property type="resolution" value="2.54 A"/>
    <property type="chains" value="H/I/J/K=1-198"/>
</dbReference>
<dbReference type="PDB" id="4DXA">
    <property type="method" value="X-ray"/>
    <property type="resolution" value="1.95 A"/>
    <property type="chains" value="B=420-736"/>
</dbReference>
<dbReference type="PDB" id="4HDO">
    <property type="method" value="X-ray"/>
    <property type="resolution" value="1.67 A"/>
    <property type="chains" value="A=417-736"/>
</dbReference>
<dbReference type="PDB" id="4HDQ">
    <property type="method" value="X-ray"/>
    <property type="resolution" value="1.95 A"/>
    <property type="chains" value="A=417-736"/>
</dbReference>
<dbReference type="PDB" id="4JIF">
    <property type="method" value="X-ray"/>
    <property type="resolution" value="1.70 A"/>
    <property type="chains" value="B=170-198"/>
</dbReference>
<dbReference type="PDB" id="4TKN">
    <property type="method" value="X-ray"/>
    <property type="resolution" value="3.00 A"/>
    <property type="chains" value="D/E/F=225-237"/>
</dbReference>
<dbReference type="PDB" id="5D68">
    <property type="method" value="X-ray"/>
    <property type="resolution" value="2.91 A"/>
    <property type="chains" value="A/B/C=259-736"/>
</dbReference>
<dbReference type="PDB" id="6OQ3">
    <property type="method" value="X-ray"/>
    <property type="resolution" value="1.85 A"/>
    <property type="chains" value="A=417-736"/>
</dbReference>
<dbReference type="PDB" id="6OQ4">
    <property type="method" value="X-ray"/>
    <property type="resolution" value="1.75 A"/>
    <property type="chains" value="A=417-736"/>
</dbReference>
<dbReference type="PDB" id="6UZK">
    <property type="method" value="X-ray"/>
    <property type="resolution" value="1.92 A"/>
    <property type="chains" value="A=417-736"/>
</dbReference>
<dbReference type="PDB" id="8SU8">
    <property type="method" value="X-ray"/>
    <property type="resolution" value="2.01 A"/>
    <property type="chains" value="A=419-736"/>
</dbReference>
<dbReference type="PDB" id="8T09">
    <property type="method" value="X-ray"/>
    <property type="resolution" value="2.15 A"/>
    <property type="chains" value="A=419-736"/>
</dbReference>
<dbReference type="PDB" id="8T7V">
    <property type="method" value="X-ray"/>
    <property type="resolution" value="2.25 A"/>
    <property type="chains" value="A=417-736"/>
</dbReference>
<dbReference type="PDBsum" id="3U7D"/>
<dbReference type="PDBsum" id="4DX8"/>
<dbReference type="PDBsum" id="4DXA"/>
<dbReference type="PDBsum" id="4HDO"/>
<dbReference type="PDBsum" id="4HDQ"/>
<dbReference type="PDBsum" id="4JIF"/>
<dbReference type="PDBsum" id="4TKN"/>
<dbReference type="PDBsum" id="5D68"/>
<dbReference type="PDBsum" id="6OQ3"/>
<dbReference type="PDBsum" id="6OQ4"/>
<dbReference type="PDBsum" id="6UZK"/>
<dbReference type="PDBsum" id="8SU8"/>
<dbReference type="PDBsum" id="8T09"/>
<dbReference type="PDBsum" id="8T7V"/>
<dbReference type="SMR" id="O00522"/>
<dbReference type="BioGRID" id="107330">
    <property type="interactions" value="48"/>
</dbReference>
<dbReference type="ComplexPortal" id="CPX-983">
    <property type="entry name" value="ICAP1-KRIT1 integrin activation complex"/>
</dbReference>
<dbReference type="ComplexPortal" id="CPX-984">
    <property type="entry name" value="CCM endothelial permeability complex"/>
</dbReference>
<dbReference type="CORUM" id="O00522"/>
<dbReference type="DIP" id="DIP-40610N"/>
<dbReference type="FunCoup" id="O00522">
    <property type="interactions" value="1374"/>
</dbReference>
<dbReference type="IntAct" id="O00522">
    <property type="interactions" value="15"/>
</dbReference>
<dbReference type="STRING" id="9606.ENSP00000378015"/>
<dbReference type="iPTMnet" id="O00522"/>
<dbReference type="PhosphoSitePlus" id="O00522"/>
<dbReference type="BioMuta" id="KRIT1"/>
<dbReference type="jPOST" id="O00522"/>
<dbReference type="MassIVE" id="O00522"/>
<dbReference type="PaxDb" id="9606-ENSP00000378015"/>
<dbReference type="PeptideAtlas" id="O00522"/>
<dbReference type="ProteomicsDB" id="47953">
    <molecule id="O00522-1"/>
</dbReference>
<dbReference type="ProteomicsDB" id="47954">
    <molecule id="O00522-2"/>
</dbReference>
<dbReference type="ProteomicsDB" id="47955">
    <molecule id="O00522-3"/>
</dbReference>
<dbReference type="Pumba" id="O00522"/>
<dbReference type="Antibodypedia" id="15587">
    <property type="antibodies" value="200 antibodies from 26 providers"/>
</dbReference>
<dbReference type="DNASU" id="889"/>
<dbReference type="Ensembl" id="ENST00000340022.6">
    <molecule id="O00522-1"/>
    <property type="protein sequence ID" value="ENSP00000344668.2"/>
    <property type="gene ID" value="ENSG00000001631.17"/>
</dbReference>
<dbReference type="Ensembl" id="ENST00000394503.6">
    <molecule id="O00522-3"/>
    <property type="protein sequence ID" value="ENSP00000378011.2"/>
    <property type="gene ID" value="ENSG00000001631.17"/>
</dbReference>
<dbReference type="Ensembl" id="ENST00000394505.7">
    <molecule id="O00522-1"/>
    <property type="protein sequence ID" value="ENSP00000378013.2"/>
    <property type="gene ID" value="ENSG00000001631.17"/>
</dbReference>
<dbReference type="Ensembl" id="ENST00000394507.5">
    <molecule id="O00522-1"/>
    <property type="protein sequence ID" value="ENSP00000378015.1"/>
    <property type="gene ID" value="ENSG00000001631.17"/>
</dbReference>
<dbReference type="Ensembl" id="ENST00000412043.6">
    <molecule id="O00522-1"/>
    <property type="protein sequence ID" value="ENSP00000410909.2"/>
    <property type="gene ID" value="ENSG00000001631.17"/>
</dbReference>
<dbReference type="Ensembl" id="ENST00000425073.2">
    <molecule id="O00522-1"/>
    <property type="protein sequence ID" value="ENSP00000404790.2"/>
    <property type="gene ID" value="ENSG00000001631.17"/>
</dbReference>
<dbReference type="Ensembl" id="ENST00000444960.6">
    <molecule id="O00522-1"/>
    <property type="protein sequence ID" value="ENSP00000388076.2"/>
    <property type="gene ID" value="ENSG00000001631.17"/>
</dbReference>
<dbReference type="Ensembl" id="ENST00000458177.7">
    <molecule id="O00522-1"/>
    <property type="protein sequence ID" value="ENSP00000391675.2"/>
    <property type="gene ID" value="ENSG00000001631.17"/>
</dbReference>
<dbReference type="Ensembl" id="ENST00000686094.1">
    <molecule id="O00522-1"/>
    <property type="protein sequence ID" value="ENSP00000510015.1"/>
    <property type="gene ID" value="ENSG00000001631.17"/>
</dbReference>
<dbReference type="Ensembl" id="ENST00000686527.1">
    <molecule id="O00522-1"/>
    <property type="protein sequence ID" value="ENSP00000509139.1"/>
    <property type="gene ID" value="ENSG00000001631.17"/>
</dbReference>
<dbReference type="Ensembl" id="ENST00000687135.1">
    <molecule id="O00522-1"/>
    <property type="protein sequence ID" value="ENSP00000509617.1"/>
    <property type="gene ID" value="ENSG00000001631.17"/>
</dbReference>
<dbReference type="Ensembl" id="ENST00000688404.1">
    <molecule id="O00522-1"/>
    <property type="protein sequence ID" value="ENSP00000509939.1"/>
    <property type="gene ID" value="ENSG00000001631.17"/>
</dbReference>
<dbReference type="Ensembl" id="ENST00000688665.1">
    <molecule id="O00522-1"/>
    <property type="protein sequence ID" value="ENSP00000509209.1"/>
    <property type="gene ID" value="ENSG00000001631.17"/>
</dbReference>
<dbReference type="Ensembl" id="ENST00000689556.1">
    <molecule id="O00522-3"/>
    <property type="protein sequence ID" value="ENSP00000508543.1"/>
    <property type="gene ID" value="ENSG00000001631.17"/>
</dbReference>
<dbReference type="Ensembl" id="ENST00000690529.1">
    <molecule id="O00522-1"/>
    <property type="protein sequence ID" value="ENSP00000510733.1"/>
    <property type="gene ID" value="ENSG00000001631.17"/>
</dbReference>
<dbReference type="Ensembl" id="ENST00000690720.1">
    <molecule id="O00522-1"/>
    <property type="protein sequence ID" value="ENSP00000509832.1"/>
    <property type="gene ID" value="ENSG00000001631.17"/>
</dbReference>
<dbReference type="Ensembl" id="ENST00000690908.1">
    <molecule id="O00522-3"/>
    <property type="protein sequence ID" value="ENSP00000510110.1"/>
    <property type="gene ID" value="ENSG00000001631.17"/>
</dbReference>
<dbReference type="Ensembl" id="ENST00000692157.1">
    <molecule id="O00522-1"/>
    <property type="protein sequence ID" value="ENSP00000509514.1"/>
    <property type="gene ID" value="ENSG00000001631.17"/>
</dbReference>
<dbReference type="Ensembl" id="ENST00000692807.1">
    <molecule id="O00522-1"/>
    <property type="protein sequence ID" value="ENSP00000508564.1"/>
    <property type="gene ID" value="ENSG00000001631.17"/>
</dbReference>
<dbReference type="GeneID" id="889"/>
<dbReference type="KEGG" id="hsa:889"/>
<dbReference type="MANE-Select" id="ENST00000394505.7">
    <property type="protein sequence ID" value="ENSP00000378013.2"/>
    <property type="RefSeq nucleotide sequence ID" value="NM_194454.3"/>
    <property type="RefSeq protein sequence ID" value="NP_919436.1"/>
</dbReference>
<dbReference type="UCSC" id="uc003ulr.2">
    <molecule id="O00522-1"/>
    <property type="organism name" value="human"/>
</dbReference>
<dbReference type="AGR" id="HGNC:1573"/>
<dbReference type="CTD" id="889"/>
<dbReference type="DisGeNET" id="889"/>
<dbReference type="GeneCards" id="KRIT1"/>
<dbReference type="GeneReviews" id="KRIT1"/>
<dbReference type="HGNC" id="HGNC:1573">
    <property type="gene designation" value="KRIT1"/>
</dbReference>
<dbReference type="HPA" id="ENSG00000001631">
    <property type="expression patterns" value="Low tissue specificity"/>
</dbReference>
<dbReference type="MalaCards" id="KRIT1"/>
<dbReference type="MIM" id="116860">
    <property type="type" value="phenotype"/>
</dbReference>
<dbReference type="MIM" id="604214">
    <property type="type" value="gene"/>
</dbReference>
<dbReference type="neXtProt" id="NX_O00522"/>
<dbReference type="OpenTargets" id="ENSG00000001631"/>
<dbReference type="Orphanet" id="221061">
    <property type="disease" value="Familial cerebral cavernous malformation"/>
</dbReference>
<dbReference type="PharmGKB" id="PA26144"/>
<dbReference type="VEuPathDB" id="HostDB:ENSG00000001631"/>
<dbReference type="eggNOG" id="KOG4335">
    <property type="taxonomic scope" value="Eukaryota"/>
</dbReference>
<dbReference type="GeneTree" id="ENSGT00530000063721"/>
<dbReference type="HOGENOM" id="CLU_022188_0_0_1"/>
<dbReference type="InParanoid" id="O00522"/>
<dbReference type="OMA" id="ICELHIR"/>
<dbReference type="OrthoDB" id="194358at2759"/>
<dbReference type="PAN-GO" id="O00522">
    <property type="GO annotations" value="4 GO annotations based on evolutionary models"/>
</dbReference>
<dbReference type="PhylomeDB" id="O00522"/>
<dbReference type="TreeFam" id="TF317921"/>
<dbReference type="BioCyc" id="MetaCyc:ENSG00000001631-MONOMER"/>
<dbReference type="PathwayCommons" id="O00522"/>
<dbReference type="SignaLink" id="O00522"/>
<dbReference type="BioGRID-ORCS" id="889">
    <property type="hits" value="14 hits in 1164 CRISPR screens"/>
</dbReference>
<dbReference type="CD-CODE" id="8C2F96ED">
    <property type="entry name" value="Centrosome"/>
</dbReference>
<dbReference type="ChiTaRS" id="KRIT1">
    <property type="organism name" value="human"/>
</dbReference>
<dbReference type="EvolutionaryTrace" id="O00522"/>
<dbReference type="GeneWiki" id="KRIT1"/>
<dbReference type="GenomeRNAi" id="889"/>
<dbReference type="Pharos" id="O00522">
    <property type="development level" value="Tbio"/>
</dbReference>
<dbReference type="PRO" id="PR:O00522"/>
<dbReference type="Proteomes" id="UP000005640">
    <property type="component" value="Chromosome 7"/>
</dbReference>
<dbReference type="RNAct" id="O00522">
    <property type="molecule type" value="protein"/>
</dbReference>
<dbReference type="Bgee" id="ENSG00000001631">
    <property type="expression patterns" value="Expressed in calcaneal tendon and 107 other cell types or tissues"/>
</dbReference>
<dbReference type="ExpressionAtlas" id="O00522">
    <property type="expression patterns" value="baseline and differential"/>
</dbReference>
<dbReference type="GO" id="GO:0005911">
    <property type="term" value="C:cell-cell junction"/>
    <property type="evidence" value="ECO:0000314"/>
    <property type="project" value="UniProtKB"/>
</dbReference>
<dbReference type="GO" id="GO:0005737">
    <property type="term" value="C:cytoplasm"/>
    <property type="evidence" value="ECO:0007669"/>
    <property type="project" value="UniProtKB-KW"/>
</dbReference>
<dbReference type="GO" id="GO:0005856">
    <property type="term" value="C:cytoskeleton"/>
    <property type="evidence" value="ECO:0007669"/>
    <property type="project" value="UniProtKB-SubCell"/>
</dbReference>
<dbReference type="GO" id="GO:0005615">
    <property type="term" value="C:extracellular space"/>
    <property type="evidence" value="ECO:0007005"/>
    <property type="project" value="UniProtKB"/>
</dbReference>
<dbReference type="GO" id="GO:0005886">
    <property type="term" value="C:plasma membrane"/>
    <property type="evidence" value="ECO:0000314"/>
    <property type="project" value="UniProtKB"/>
</dbReference>
<dbReference type="GO" id="GO:0032991">
    <property type="term" value="C:protein-containing complex"/>
    <property type="evidence" value="ECO:0007669"/>
    <property type="project" value="Ensembl"/>
</dbReference>
<dbReference type="GO" id="GO:0030695">
    <property type="term" value="F:GTPase regulator activity"/>
    <property type="evidence" value="ECO:0000304"/>
    <property type="project" value="ProtInc"/>
</dbReference>
<dbReference type="GO" id="GO:0008017">
    <property type="term" value="F:microtubule binding"/>
    <property type="evidence" value="ECO:0000314"/>
    <property type="project" value="UniProtKB"/>
</dbReference>
<dbReference type="GO" id="GO:0005546">
    <property type="term" value="F:phosphatidylinositol-4,5-bisphosphate binding"/>
    <property type="evidence" value="ECO:0000314"/>
    <property type="project" value="UniProtKB"/>
</dbReference>
<dbReference type="GO" id="GO:0001525">
    <property type="term" value="P:angiogenesis"/>
    <property type="evidence" value="ECO:0007669"/>
    <property type="project" value="UniProtKB-KW"/>
</dbReference>
<dbReference type="GO" id="GO:0045454">
    <property type="term" value="P:cell redox homeostasis"/>
    <property type="evidence" value="ECO:0000315"/>
    <property type="project" value="UniProtKB"/>
</dbReference>
<dbReference type="GO" id="GO:0003158">
    <property type="term" value="P:endothelium development"/>
    <property type="evidence" value="ECO:0000303"/>
    <property type="project" value="ComplexPortal"/>
</dbReference>
<dbReference type="GO" id="GO:0033622">
    <property type="term" value="P:integrin activation"/>
    <property type="evidence" value="ECO:0000314"/>
    <property type="project" value="ComplexPortal"/>
</dbReference>
<dbReference type="GO" id="GO:0016525">
    <property type="term" value="P:negative regulation of angiogenesis"/>
    <property type="evidence" value="ECO:0000315"/>
    <property type="project" value="UniProtKB"/>
</dbReference>
<dbReference type="GO" id="GO:2000352">
    <property type="term" value="P:negative regulation of endothelial cell apoptotic process"/>
    <property type="evidence" value="ECO:0000315"/>
    <property type="project" value="UniProtKB"/>
</dbReference>
<dbReference type="GO" id="GO:0010596">
    <property type="term" value="P:negative regulation of endothelial cell migration"/>
    <property type="evidence" value="ECO:0000315"/>
    <property type="project" value="UniProtKB"/>
</dbReference>
<dbReference type="GO" id="GO:0001937">
    <property type="term" value="P:negative regulation of endothelial cell proliferation"/>
    <property type="evidence" value="ECO:0000315"/>
    <property type="project" value="UniProtKB"/>
</dbReference>
<dbReference type="GO" id="GO:0045765">
    <property type="term" value="P:regulation of angiogenesis"/>
    <property type="evidence" value="ECO:0000303"/>
    <property type="project" value="ComplexPortal"/>
</dbReference>
<dbReference type="GO" id="GO:2000114">
    <property type="term" value="P:regulation of establishment of cell polarity"/>
    <property type="evidence" value="ECO:0000315"/>
    <property type="project" value="UniProtKB"/>
</dbReference>
<dbReference type="GO" id="GO:0007264">
    <property type="term" value="P:small GTPase-mediated signal transduction"/>
    <property type="evidence" value="ECO:0000304"/>
    <property type="project" value="ProtInc"/>
</dbReference>
<dbReference type="CDD" id="cd14473">
    <property type="entry name" value="FERM_B-lobe"/>
    <property type="match status" value="1"/>
</dbReference>
<dbReference type="CDD" id="cd13197">
    <property type="entry name" value="FERM_C_CCM1"/>
    <property type="match status" value="1"/>
</dbReference>
<dbReference type="DisProt" id="DP01333"/>
<dbReference type="FunFam" id="1.20.80.10:FF:000016">
    <property type="entry name" value="Krev interaction trapped protein 1"/>
    <property type="match status" value="1"/>
</dbReference>
<dbReference type="FunFam" id="3.10.20.90:FF:000076">
    <property type="entry name" value="Krev interaction trapped protein 1"/>
    <property type="match status" value="1"/>
</dbReference>
<dbReference type="FunFam" id="3.30.70.2240:FF:000001">
    <property type="entry name" value="Krev interaction trapped protein 1"/>
    <property type="match status" value="1"/>
</dbReference>
<dbReference type="FunFam" id="3.30.70.2240:FF:000002">
    <property type="entry name" value="krev interaction trapped protein 1"/>
    <property type="match status" value="1"/>
</dbReference>
<dbReference type="FunFam" id="1.25.40.20:FF:000120">
    <property type="entry name" value="krev interaction trapped protein 1 isoform X1"/>
    <property type="match status" value="1"/>
</dbReference>
<dbReference type="FunFam" id="2.30.29.30:FF:000227">
    <property type="entry name" value="krev interaction trapped protein 1 isoform X1"/>
    <property type="match status" value="1"/>
</dbReference>
<dbReference type="Gene3D" id="1.20.80.10">
    <property type="match status" value="1"/>
</dbReference>
<dbReference type="Gene3D" id="1.25.40.20">
    <property type="entry name" value="Ankyrin repeat-containing domain"/>
    <property type="match status" value="1"/>
</dbReference>
<dbReference type="Gene3D" id="3.30.70.2240">
    <property type="entry name" value="KRIT, N-terminal Nudix domain, NPxY motif-rich region"/>
    <property type="match status" value="2"/>
</dbReference>
<dbReference type="Gene3D" id="3.10.20.90">
    <property type="entry name" value="Phosphatidylinositol 3-kinase Catalytic Subunit, Chain A, domain 1"/>
    <property type="match status" value="1"/>
</dbReference>
<dbReference type="Gene3D" id="2.30.29.30">
    <property type="entry name" value="Pleckstrin-homology domain (PH domain)/Phosphotyrosine-binding domain (PTB)"/>
    <property type="match status" value="1"/>
</dbReference>
<dbReference type="InterPro" id="IPR002110">
    <property type="entry name" value="Ankyrin_rpt"/>
</dbReference>
<dbReference type="InterPro" id="IPR036770">
    <property type="entry name" value="Ankyrin_rpt-contain_sf"/>
</dbReference>
<dbReference type="InterPro" id="IPR056485">
    <property type="entry name" value="ARM_KRIT1"/>
</dbReference>
<dbReference type="InterPro" id="IPR019749">
    <property type="entry name" value="Band_41_domain"/>
</dbReference>
<dbReference type="InterPro" id="IPR014352">
    <property type="entry name" value="FERM/acyl-CoA-bd_prot_sf"/>
</dbReference>
<dbReference type="InterPro" id="IPR035963">
    <property type="entry name" value="FERM_2"/>
</dbReference>
<dbReference type="InterPro" id="IPR019748">
    <property type="entry name" value="FERM_central"/>
</dbReference>
<dbReference type="InterPro" id="IPR000299">
    <property type="entry name" value="FERM_domain"/>
</dbReference>
<dbReference type="InterPro" id="IPR051594">
    <property type="entry name" value="KRIT1/FRMD8"/>
</dbReference>
<dbReference type="InterPro" id="IPR041791">
    <property type="entry name" value="KRIT1_FERM_C"/>
</dbReference>
<dbReference type="InterPro" id="IPR032022">
    <property type="entry name" value="NUDIX"/>
</dbReference>
<dbReference type="InterPro" id="IPR043058">
    <property type="entry name" value="NUDIX_sf"/>
</dbReference>
<dbReference type="InterPro" id="IPR011993">
    <property type="entry name" value="PH-like_dom_sf"/>
</dbReference>
<dbReference type="PANTHER" id="PTHR13283">
    <property type="entry name" value="KREV INTERACTION TRAPPED 1-RELATED"/>
    <property type="match status" value="1"/>
</dbReference>
<dbReference type="PANTHER" id="PTHR13283:SF11">
    <property type="entry name" value="KREV INTERACTION TRAPPED PROTEIN 1"/>
    <property type="match status" value="1"/>
</dbReference>
<dbReference type="Pfam" id="PF24521">
    <property type="entry name" value="Ank_KRIT1"/>
    <property type="match status" value="1"/>
</dbReference>
<dbReference type="Pfam" id="PF00373">
    <property type="entry name" value="FERM_M"/>
    <property type="match status" value="1"/>
</dbReference>
<dbReference type="Pfam" id="PF24522">
    <property type="entry name" value="KRIT1_FRMD8_FERM_C"/>
    <property type="match status" value="1"/>
</dbReference>
<dbReference type="Pfam" id="PF16705">
    <property type="entry name" value="NUDIX_5"/>
    <property type="match status" value="1"/>
</dbReference>
<dbReference type="SMART" id="SM00248">
    <property type="entry name" value="ANK"/>
    <property type="match status" value="3"/>
</dbReference>
<dbReference type="SMART" id="SM00295">
    <property type="entry name" value="B41"/>
    <property type="match status" value="1"/>
</dbReference>
<dbReference type="SUPFAM" id="SSF48403">
    <property type="entry name" value="Ankyrin repeat"/>
    <property type="match status" value="1"/>
</dbReference>
<dbReference type="SUPFAM" id="SSF47031">
    <property type="entry name" value="Second domain of FERM"/>
    <property type="match status" value="1"/>
</dbReference>
<dbReference type="PROSITE" id="PS50297">
    <property type="entry name" value="ANK_REP_REGION"/>
    <property type="match status" value="1"/>
</dbReference>
<dbReference type="PROSITE" id="PS50088">
    <property type="entry name" value="ANK_REPEAT"/>
    <property type="match status" value="1"/>
</dbReference>
<dbReference type="PROSITE" id="PS50057">
    <property type="entry name" value="FERM_3"/>
    <property type="match status" value="1"/>
</dbReference>
<accession>O00522</accession>
<accession>A6NNU0</accession>
<accession>O43894</accession>
<accession>Q506L6</accession>
<accession>Q6U276</accession>
<accession>Q75N19</accession>
<accession>Q9H180</accession>
<accession>Q9H264</accession>
<accession>Q9HAX5</accession>
<sequence>MGNPENIEDAYVAVIRPKNTASLNSREYRAKSYEILLHEVPIEGQKKKRKKVLLETKLQGNSEITQGILDYVVETTKPISPANQGIRGKRVVLMKKFPLDGEKMGREASLFIVPSVVKDNTKYTYTPGCPIFYCLQDIMRVCSESSTHFATLTARMLIALDKWLDERHAQSHFIPALFRPSPLERIKTNVINPAYATESGQTENSLHMGYSALEIKSKMLALEKADTCIYNPLFGSDLQYTNRVDKVVINPYFGLGAPDYSKIQIPKQEKWQRSMSSVTEDKERQWVDDFPLHRSACEGDSELLSRLLSERFSVNQLDSDHWAPIHYACWYGKVEATRILLEKGKCNPNLLNGQLSSPLHFAAGGGHAEIVQILLNHPETDRHITDQQGRSPLNICEENKQNNWEEAAKLLKEAINKPYEKVRIYRMDGSYRSVELKHGNNTTVQQIMEGMRLSQETQQYFTIWICSENLSLQLKPYHKPLQHVRDWPEILAELTNLDPQRETPQLFLRRDVRLPLEVEKQIEDPLAILILFDEARYNLLKGFYTAPDAKLITLASLLLQIVYGNYESKKHKQGFLNEENLKSIVPVTKLKSKAPHWTNRILHEYKNLSTSEGVSKEMHHLQRMFLQNCWEIPTYGAAFFTGQIFTKASPSNHKVIPVYVGVNIKGLHLLNMETKALLISLKYGCFMWQLGDTDTCFQIHSMENKMSFIVHTKQAGLVVKLLMKLNGQLMPTERNS</sequence>
<protein>
    <recommendedName>
        <fullName>Krev interaction trapped protein 1</fullName>
        <shortName>Krev interaction trapped 1</shortName>
    </recommendedName>
    <alternativeName>
        <fullName>Cerebral cavernous malformations 1 protein</fullName>
    </alternativeName>
</protein>
<reference key="1">
    <citation type="journal article" date="1997" name="Oncogene">
        <title>Association of Krev-1/rap1a with Krit1, a novel ankyrin repeat-containing protein encoded by a gene mapping to 7q21-22.</title>
        <authorList>
            <person name="Serebriiskii I."/>
            <person name="Estojak J."/>
            <person name="Sonoda G."/>
            <person name="Testa J.R."/>
            <person name="Golemis E.A."/>
        </authorList>
    </citation>
    <scope>NUCLEOTIDE SEQUENCE [GENOMIC DNA]</scope>
    <scope>NUCLEOTIDE SEQUENCE [MRNA] (ISOFORM 2)</scope>
    <scope>TISSUE SPECIFICITY</scope>
    <scope>INTERACTION WITH RAP1A</scope>
    <source>
        <tissue>Kidney</tissue>
        <tissue>Mammary cancer</tissue>
    </source>
</reference>
<reference key="2">
    <citation type="journal article" date="2000" name="Genomics">
        <title>Cloning of the murine Krit1 cDNA reveals novel mammalian 5' coding exons.</title>
        <authorList>
            <person name="Zhang J."/>
            <person name="Clatterbuck R.E."/>
            <person name="Rigamonti D."/>
            <person name="Dietz H.C."/>
        </authorList>
    </citation>
    <scope>NUCLEOTIDE SEQUENCE [MRNA] (ISOFORM 1)</scope>
</reference>
<reference key="3">
    <citation type="journal article" date="2001" name="Genomics">
        <title>Computational and experimental analyses reveal previously undetected coding exons of the KRIT1 (CCM1) gene.</title>
        <authorList>
            <person name="Sahoo T."/>
            <person name="Goenaga-Diaz E."/>
            <person name="Serebriiskii I.G."/>
            <person name="Thomas J.W."/>
            <person name="Kotova E."/>
            <person name="Cuellar J.G."/>
            <person name="Peloquin J.M."/>
            <person name="Golemis E."/>
            <person name="Beitinjaneh F."/>
            <person name="Green E.D."/>
            <person name="Johnson E.W."/>
            <person name="Marchuk D.A."/>
        </authorList>
    </citation>
    <scope>NUCLEOTIDE SEQUENCE [MRNA] (ISOFORM 1)</scope>
    <scope>ALTERNATIVE SPLICING</scope>
</reference>
<reference key="4">
    <citation type="journal article" date="2002" name="Acta Neuropathol.">
        <title>Mutation and expression analysis of the KRIT1 gene associated with cerebral cavernous malformations (CCM1).</title>
        <authorList>
            <person name="Kehrer-Sawatzki H."/>
            <person name="Wilda M."/>
            <person name="Braun V.M."/>
            <person name="Richter H.-P."/>
            <person name="Hameister H."/>
        </authorList>
    </citation>
    <scope>NUCLEOTIDE SEQUENCE [MRNA] (ISOFORM 1)</scope>
    <scope>ALTERNATIVE SPLICING</scope>
    <scope>VARIANTS CCM1 SER-97 AND GLU-569</scope>
</reference>
<reference key="5">
    <citation type="submission" date="2003-09" db="EMBL/GenBank/DDBJ databases">
        <title>Four novel and three known KRIT1 mutations in CCM Italian patients: Characterization at mRNA and protein level.</title>
        <authorList>
            <person name="Ferrera L."/>
            <person name="Marini V."/>
            <person name="Dorcaratto A."/>
            <person name="Pigatto F."/>
            <person name="Alberti F."/>
            <person name="Forni M."/>
            <person name="Cama A."/>
            <person name="Viale G."/>
            <person name="Origone P."/>
            <person name="Mareni C."/>
            <person name="Garre' C."/>
        </authorList>
    </citation>
    <scope>NUCLEOTIDE SEQUENCE [MRNA] (ISOFORM 1)</scope>
</reference>
<reference key="6">
    <citation type="journal article" date="2004" name="Nat. Genet.">
        <title>Complete sequencing and characterization of 21,243 full-length human cDNAs.</title>
        <authorList>
            <person name="Ota T."/>
            <person name="Suzuki Y."/>
            <person name="Nishikawa T."/>
            <person name="Otsuki T."/>
            <person name="Sugiyama T."/>
            <person name="Irie R."/>
            <person name="Wakamatsu A."/>
            <person name="Hayashi K."/>
            <person name="Sato H."/>
            <person name="Nagai K."/>
            <person name="Kimura K."/>
            <person name="Makita H."/>
            <person name="Sekine M."/>
            <person name="Obayashi M."/>
            <person name="Nishi T."/>
            <person name="Shibahara T."/>
            <person name="Tanaka T."/>
            <person name="Ishii S."/>
            <person name="Yamamoto J."/>
            <person name="Saito K."/>
            <person name="Kawai Y."/>
            <person name="Isono Y."/>
            <person name="Nakamura Y."/>
            <person name="Nagahari K."/>
            <person name="Murakami K."/>
            <person name="Yasuda T."/>
            <person name="Iwayanagi T."/>
            <person name="Wagatsuma M."/>
            <person name="Shiratori A."/>
            <person name="Sudo H."/>
            <person name="Hosoiri T."/>
            <person name="Kaku Y."/>
            <person name="Kodaira H."/>
            <person name="Kondo H."/>
            <person name="Sugawara M."/>
            <person name="Takahashi M."/>
            <person name="Kanda K."/>
            <person name="Yokoi T."/>
            <person name="Furuya T."/>
            <person name="Kikkawa E."/>
            <person name="Omura Y."/>
            <person name="Abe K."/>
            <person name="Kamihara K."/>
            <person name="Katsuta N."/>
            <person name="Sato K."/>
            <person name="Tanikawa M."/>
            <person name="Yamazaki M."/>
            <person name="Ninomiya K."/>
            <person name="Ishibashi T."/>
            <person name="Yamashita H."/>
            <person name="Murakawa K."/>
            <person name="Fujimori K."/>
            <person name="Tanai H."/>
            <person name="Kimata M."/>
            <person name="Watanabe M."/>
            <person name="Hiraoka S."/>
            <person name="Chiba Y."/>
            <person name="Ishida S."/>
            <person name="Ono Y."/>
            <person name="Takiguchi S."/>
            <person name="Watanabe S."/>
            <person name="Yosida M."/>
            <person name="Hotuta T."/>
            <person name="Kusano J."/>
            <person name="Kanehori K."/>
            <person name="Takahashi-Fujii A."/>
            <person name="Hara H."/>
            <person name="Tanase T.-O."/>
            <person name="Nomura Y."/>
            <person name="Togiya S."/>
            <person name="Komai F."/>
            <person name="Hara R."/>
            <person name="Takeuchi K."/>
            <person name="Arita M."/>
            <person name="Imose N."/>
            <person name="Musashino K."/>
            <person name="Yuuki H."/>
            <person name="Oshima A."/>
            <person name="Sasaki N."/>
            <person name="Aotsuka S."/>
            <person name="Yoshikawa Y."/>
            <person name="Matsunawa H."/>
            <person name="Ichihara T."/>
            <person name="Shiohata N."/>
            <person name="Sano S."/>
            <person name="Moriya S."/>
            <person name="Momiyama H."/>
            <person name="Satoh N."/>
            <person name="Takami S."/>
            <person name="Terashima Y."/>
            <person name="Suzuki O."/>
            <person name="Nakagawa S."/>
            <person name="Senoh A."/>
            <person name="Mizoguchi H."/>
            <person name="Goto Y."/>
            <person name="Shimizu F."/>
            <person name="Wakebe H."/>
            <person name="Hishigaki H."/>
            <person name="Watanabe T."/>
            <person name="Sugiyama A."/>
            <person name="Takemoto M."/>
            <person name="Kawakami B."/>
            <person name="Yamazaki M."/>
            <person name="Watanabe K."/>
            <person name="Kumagai A."/>
            <person name="Itakura S."/>
            <person name="Fukuzumi Y."/>
            <person name="Fujimori Y."/>
            <person name="Komiyama M."/>
            <person name="Tashiro H."/>
            <person name="Tanigami A."/>
            <person name="Fujiwara T."/>
            <person name="Ono T."/>
            <person name="Yamada K."/>
            <person name="Fujii Y."/>
            <person name="Ozaki K."/>
            <person name="Hirao M."/>
            <person name="Ohmori Y."/>
            <person name="Kawabata A."/>
            <person name="Hikiji T."/>
            <person name="Kobatake N."/>
            <person name="Inagaki H."/>
            <person name="Ikema Y."/>
            <person name="Okamoto S."/>
            <person name="Okitani R."/>
            <person name="Kawakami T."/>
            <person name="Noguchi S."/>
            <person name="Itoh T."/>
            <person name="Shigeta K."/>
            <person name="Senba T."/>
            <person name="Matsumura K."/>
            <person name="Nakajima Y."/>
            <person name="Mizuno T."/>
            <person name="Morinaga M."/>
            <person name="Sasaki M."/>
            <person name="Togashi T."/>
            <person name="Oyama M."/>
            <person name="Hata H."/>
            <person name="Watanabe M."/>
            <person name="Komatsu T."/>
            <person name="Mizushima-Sugano J."/>
            <person name="Satoh T."/>
            <person name="Shirai Y."/>
            <person name="Takahashi Y."/>
            <person name="Nakagawa K."/>
            <person name="Okumura K."/>
            <person name="Nagase T."/>
            <person name="Nomura N."/>
            <person name="Kikuchi H."/>
            <person name="Masuho Y."/>
            <person name="Yamashita R."/>
            <person name="Nakai K."/>
            <person name="Yada T."/>
            <person name="Nakamura Y."/>
            <person name="Ohara O."/>
            <person name="Isogai T."/>
            <person name="Sugano S."/>
        </authorList>
    </citation>
    <scope>NUCLEOTIDE SEQUENCE [LARGE SCALE MRNA] (ISOFORM 3)</scope>
    <source>
        <tissue>Brain</tissue>
    </source>
</reference>
<reference key="7">
    <citation type="journal article" date="2003" name="Nature">
        <title>The DNA sequence of human chromosome 7.</title>
        <authorList>
            <person name="Hillier L.W."/>
            <person name="Fulton R.S."/>
            <person name="Fulton L.A."/>
            <person name="Graves T.A."/>
            <person name="Pepin K.H."/>
            <person name="Wagner-McPherson C."/>
            <person name="Layman D."/>
            <person name="Maas J."/>
            <person name="Jaeger S."/>
            <person name="Walker R."/>
            <person name="Wylie K."/>
            <person name="Sekhon M."/>
            <person name="Becker M.C."/>
            <person name="O'Laughlin M.D."/>
            <person name="Schaller M.E."/>
            <person name="Fewell G.A."/>
            <person name="Delehaunty K.D."/>
            <person name="Miner T.L."/>
            <person name="Nash W.E."/>
            <person name="Cordes M."/>
            <person name="Du H."/>
            <person name="Sun H."/>
            <person name="Edwards J."/>
            <person name="Bradshaw-Cordum H."/>
            <person name="Ali J."/>
            <person name="Andrews S."/>
            <person name="Isak A."/>
            <person name="Vanbrunt A."/>
            <person name="Nguyen C."/>
            <person name="Du F."/>
            <person name="Lamar B."/>
            <person name="Courtney L."/>
            <person name="Kalicki J."/>
            <person name="Ozersky P."/>
            <person name="Bielicki L."/>
            <person name="Scott K."/>
            <person name="Holmes A."/>
            <person name="Harkins R."/>
            <person name="Harris A."/>
            <person name="Strong C.M."/>
            <person name="Hou S."/>
            <person name="Tomlinson C."/>
            <person name="Dauphin-Kohlberg S."/>
            <person name="Kozlowicz-Reilly A."/>
            <person name="Leonard S."/>
            <person name="Rohlfing T."/>
            <person name="Rock S.M."/>
            <person name="Tin-Wollam A.-M."/>
            <person name="Abbott A."/>
            <person name="Minx P."/>
            <person name="Maupin R."/>
            <person name="Strowmatt C."/>
            <person name="Latreille P."/>
            <person name="Miller N."/>
            <person name="Johnson D."/>
            <person name="Murray J."/>
            <person name="Woessner J.P."/>
            <person name="Wendl M.C."/>
            <person name="Yang S.-P."/>
            <person name="Schultz B.R."/>
            <person name="Wallis J.W."/>
            <person name="Spieth J."/>
            <person name="Bieri T.A."/>
            <person name="Nelson J.O."/>
            <person name="Berkowicz N."/>
            <person name="Wohldmann P.E."/>
            <person name="Cook L.L."/>
            <person name="Hickenbotham M.T."/>
            <person name="Eldred J."/>
            <person name="Williams D."/>
            <person name="Bedell J.A."/>
            <person name="Mardis E.R."/>
            <person name="Clifton S.W."/>
            <person name="Chissoe S.L."/>
            <person name="Marra M.A."/>
            <person name="Raymond C."/>
            <person name="Haugen E."/>
            <person name="Gillett W."/>
            <person name="Zhou Y."/>
            <person name="James R."/>
            <person name="Phelps K."/>
            <person name="Iadanoto S."/>
            <person name="Bubb K."/>
            <person name="Simms E."/>
            <person name="Levy R."/>
            <person name="Clendenning J."/>
            <person name="Kaul R."/>
            <person name="Kent W.J."/>
            <person name="Furey T.S."/>
            <person name="Baertsch R.A."/>
            <person name="Brent M.R."/>
            <person name="Keibler E."/>
            <person name="Flicek P."/>
            <person name="Bork P."/>
            <person name="Suyama M."/>
            <person name="Bailey J.A."/>
            <person name="Portnoy M.E."/>
            <person name="Torrents D."/>
            <person name="Chinwalla A.T."/>
            <person name="Gish W.R."/>
            <person name="Eddy S.R."/>
            <person name="McPherson J.D."/>
            <person name="Olson M.V."/>
            <person name="Eichler E.E."/>
            <person name="Green E.D."/>
            <person name="Waterston R.H."/>
            <person name="Wilson R.K."/>
        </authorList>
    </citation>
    <scope>NUCLEOTIDE SEQUENCE [LARGE SCALE GENOMIC DNA]</scope>
</reference>
<reference key="8">
    <citation type="journal article" date="2004" name="Genome Res.">
        <title>The status, quality, and expansion of the NIH full-length cDNA project: the Mammalian Gene Collection (MGC).</title>
        <authorList>
            <consortium name="The MGC Project Team"/>
        </authorList>
    </citation>
    <scope>NUCLEOTIDE SEQUENCE [LARGE SCALE MRNA] (ISOFORM 1)</scope>
    <source>
        <tissue>Brain</tissue>
        <tissue>Uterus</tissue>
    </source>
</reference>
<reference key="9">
    <citation type="journal article" date="2001" name="Biochim. Biophys. Acta">
        <title>Identification of eight novel 5`-exons in cerebral capillary malformation gene-1 (CCM1) encoding KRIT1.</title>
        <authorList>
            <person name="Eerola I."/>
            <person name="McIntyre B."/>
            <person name="Vikkula M."/>
        </authorList>
    </citation>
    <scope>NUCLEOTIDE SEQUENCE [MRNA] OF 1-243</scope>
    <scope>ALTERNATIVE SPLICING</scope>
</reference>
<reference key="10">
    <citation type="submission" date="2005-03" db="EMBL/GenBank/DDBJ databases">
        <title>Six novel and three known KRIT1 mutations in CCM patients: characterization at mRNA level.</title>
        <authorList>
            <person name="Marini V."/>
            <person name="Ferrera L."/>
            <person name="Dorcaratto A."/>
            <person name="Forni M."/>
            <person name="Capra V."/>
            <person name="Origone P."/>
            <person name="Mareni C."/>
            <person name="Garre' C."/>
        </authorList>
    </citation>
    <scope>NUCLEOTIDE SEQUENCE [GENOMIC DNA] OF 244-281</scope>
</reference>
<reference key="11">
    <citation type="journal article" date="2001" name="Hum. Mol. Genet.">
        <title>Interaction between krit1 and icap1alpha infers perturbation of integrin beta1-mediated angiogenesis in the pathogenesis of cerebral cavernous malformation.</title>
        <authorList>
            <person name="Zhang J."/>
            <person name="Clatterbuck R.E."/>
            <person name="Rigamonti D."/>
            <person name="Chang D.D."/>
            <person name="Dietz H.C."/>
        </authorList>
    </citation>
    <scope>FUNCTION</scope>
    <scope>INTERACTION WITH ITGB1 AND ITGB1BP1</scope>
    <scope>MUTAGENESIS OF ASN-192 AND TYR-195</scope>
</reference>
<reference key="12">
    <citation type="journal article" date="2002" name="Hum. Mol. Genet.">
        <title>KRIT1 association with the integrin-binding protein ICAP-1: a new direction in the elucidation of cerebral cavernous malformations (CCM1) pathogenesis.</title>
        <authorList>
            <person name="Zawistowski J.S."/>
            <person name="Serebriiskii I.G."/>
            <person name="Lee M.F."/>
            <person name="Golemis E.A."/>
            <person name="Marchuk D.A."/>
        </authorList>
    </citation>
    <scope>INTERACTION WITH ITGB1BP1</scope>
    <scope>MUTAGENESIS OF ASN-192 AND TYR-195</scope>
</reference>
<reference key="13">
    <citation type="journal article" date="2007" name="FEBS J.">
        <title>Krit 1 interactions with microtubules and membranes are regulated by Rap1 and integrin cytoplasmic domain associated protein-1.</title>
        <authorList>
            <person name="Beraud-Dufour S."/>
            <person name="Gautier R."/>
            <person name="Albiges-Rizo C."/>
            <person name="Chardin P."/>
            <person name="Faurobert E."/>
        </authorList>
    </citation>
    <scope>FUNCTION</scope>
    <scope>IDENTIFICATION IN A COMPLEX WITH ITGB1BP1 AND RAP1A</scope>
    <scope>INTERACTION WITH ITGB1BP1 AND RAP1A</scope>
    <scope>SUBCELLULAR LOCATION</scope>
    <scope>MUTAGENESIS OF 47-LYS--LYS-50 AND 192-ASN--TYR-195</scope>
</reference>
<reference key="14">
    <citation type="journal article" date="2010" name="J. Cell Sci.">
        <title>CCM1 regulates vascular-lumen organization by inducing endothelial polarity.</title>
        <authorList>
            <person name="Lampugnani M.G."/>
            <person name="Orsenigo F."/>
            <person name="Rudini N."/>
            <person name="Maddaluno L."/>
            <person name="Boulday G."/>
            <person name="Chapon F."/>
            <person name="Dejana E."/>
        </authorList>
    </citation>
    <scope>FUNCTION</scope>
    <scope>SUBCELLULAR LOCATION</scope>
    <scope>INTERACTION WITH CDH5</scope>
</reference>
<reference key="15">
    <citation type="journal article" date="2010" name="PLoS ONE">
        <title>KRIT1 regulates the homeostasis of intracellular reactive oxygen species.</title>
        <authorList>
            <person name="Goitre L."/>
            <person name="Balzac F."/>
            <person name="Degani S."/>
            <person name="Degan P."/>
            <person name="Marchi S."/>
            <person name="Pinton P."/>
            <person name="Retta S.F."/>
        </authorList>
    </citation>
    <scope>FUNCTION</scope>
</reference>
<reference key="16">
    <citation type="journal article" date="2010" name="Proc. Natl. Acad. Sci. U.S.A.">
        <title>Cerebral cavernous malformation protein CCM1 inhibits sprouting angiogenesis by activating DELTA-NOTCH signaling.</title>
        <authorList>
            <person name="Wuestehube J."/>
            <person name="Bartol A."/>
            <person name="Liebler S.S."/>
            <person name="Bruetsch R."/>
            <person name="Zhu Y."/>
            <person name="Felbor U."/>
            <person name="Sure U."/>
            <person name="Augustin H.G."/>
            <person name="Fischer A."/>
        </authorList>
    </citation>
    <scope>FUNCTION</scope>
</reference>
<reference key="17">
    <citation type="journal article" date="2011" name="Mol. Biol. Cell">
        <title>A mechanism of Rap1-induced stabilization of endothelial cell--cell junctions.</title>
        <authorList>
            <person name="Liu J.J."/>
            <person name="Stockton R.A."/>
            <person name="Gingras A.R."/>
            <person name="Ablooglu A.J."/>
            <person name="Han J."/>
            <person name="Bobkov A.A."/>
            <person name="Ginsberg M.H."/>
        </authorList>
    </citation>
    <scope>FUNCTION</scope>
    <scope>SUBCELLULAR LOCATION</scope>
    <scope>INTERACTION WITH RAP1A</scope>
    <scope>MUTAGENESIS OF ARG-452</scope>
</reference>
<reference key="18">
    <citation type="journal article" date="2015" name="EMBO Mol. Med.">
        <title>Defective autophagy is a key feature of cerebral cavernous malformations.</title>
        <authorList>
            <person name="Marchi S."/>
            <person name="Corricelli M."/>
            <person name="Trapani E."/>
            <person name="Bravi L."/>
            <person name="Pittaro A."/>
            <person name="Delle Monache S."/>
            <person name="Ferroni L."/>
            <person name="Patergnani S."/>
            <person name="Missiroli S."/>
            <person name="Goitre L."/>
            <person name="Trabalzini L."/>
            <person name="Rimessi A."/>
            <person name="Giorgi C."/>
            <person name="Zavan B."/>
            <person name="Cassoni P."/>
            <person name="Dejana E."/>
            <person name="Retta S.F."/>
            <person name="Pinton P."/>
        </authorList>
    </citation>
    <scope>FUNCTION</scope>
</reference>
<reference key="19">
    <citation type="journal article" date="2012" name="J. Biol. Chem.">
        <title>Structural basis for small G protein effector interaction of Ras-related protein 1 (Rap1) and adaptor protein Krev interaction trapped 1 (KRIT1).</title>
        <authorList>
            <person name="Li X."/>
            <person name="Zhang R."/>
            <person name="Draheim K.M."/>
            <person name="Liu W."/>
            <person name="Calderwood D.A."/>
            <person name="Boggon T.J."/>
        </authorList>
    </citation>
    <scope>X-RAY CRYSTALLOGRAPHY (1.95 ANGSTROMS) OF 420-736 IN COMPLEX WITH RAP1B</scope>
    <scope>MUTAGENESIS OF SER-430; ARG-432 AND ARG-452</scope>
    <scope>INTERACTION WITH RAP1B</scope>
</reference>
<reference key="20">
    <citation type="journal article" date="2012" name="J. Cell Biol.">
        <title>Structural basis of the junctional anchorage of the cerebral cavernous malformations complex.</title>
        <authorList>
            <person name="Gingras A.R."/>
            <person name="Liu J.J."/>
            <person name="Ginsberg M.H."/>
        </authorList>
    </citation>
    <scope>X-RAY CRYSTALLOGRAPHY (2.49 ANGSTROMS) OF 417-736 IN COMPLEX WITH HEG1</scope>
    <scope>INTERACTION WITH HEG1; RAP1A AND CCM2</scope>
    <scope>SUBCELLULAR LOCATION</scope>
    <scope>MUTAGENESIS OF LEU-717 AND LEU-721</scope>
</reference>
<reference key="21">
    <citation type="journal article" date="2013" name="Mol. Cell">
        <title>Mechanism for KRIT1 release of ICAP1-mediated suppression of integrin activation.</title>
        <authorList>
            <person name="Liu W."/>
            <person name="Draheim K.M."/>
            <person name="Zhang R."/>
            <person name="Calderwood D.A."/>
            <person name="Boggon T.J."/>
        </authorList>
    </citation>
    <scope>X-RAY CRYSTALLOGRAPHY (2.54 ANGSTROMS) OF 1-198 IN COMPLEX WITH ITGB1BP1</scope>
    <scope>INTERACTION WITH ITGB1BP1</scope>
    <scope>FUNCTION</scope>
    <scope>DOMAIN</scope>
    <scope>MUTAGENESIS OF ALA-176; ARG-179; PRO-182; ARG-185; ASN-192 AND TYR-195</scope>
</reference>
<reference evidence="21" key="22">
    <citation type="journal article" date="2015" name="J. Struct. Biol.">
        <title>Structural analysis of the KRIT1 ankyrin repeat and FERM domains reveals a conformationally stable ARD-FERM interface.</title>
        <authorList>
            <person name="Zhang R."/>
            <person name="Li X."/>
            <person name="Boggon T.J."/>
        </authorList>
    </citation>
    <scope>X-RAY CRYSTALLOGRAPHY (2.91 ANGSTROMS) OF 259-736</scope>
    <scope>ANK REPEAT DOMAIN</scope>
</reference>
<feature type="chain" id="PRO_0000067023" description="Krev interaction trapped protein 1">
    <location>
        <begin position="1"/>
        <end position="736"/>
    </location>
</feature>
<feature type="repeat" description="ANK 1" evidence="2">
    <location>
        <begin position="287"/>
        <end position="316"/>
    </location>
</feature>
<feature type="repeat" description="ANK 2" evidence="2">
    <location>
        <begin position="320"/>
        <end position="350"/>
    </location>
</feature>
<feature type="repeat" description="ANK 3" evidence="2">
    <location>
        <begin position="354"/>
        <end position="383"/>
    </location>
</feature>
<feature type="repeat" description="ANK 4" evidence="2">
    <location>
        <begin position="388"/>
        <end position="419"/>
    </location>
</feature>
<feature type="domain" description="FERM" evidence="3">
    <location>
        <begin position="420"/>
        <end position="734"/>
    </location>
</feature>
<feature type="region of interest" description="N-terminal domain similar to Nudix hydrolase domain">
    <location>
        <begin position="1"/>
        <end position="170"/>
    </location>
</feature>
<feature type="region of interest" description="Interaction with ITGB1BP1">
    <location>
        <begin position="172"/>
        <end position="195"/>
    </location>
</feature>
<feature type="region of interest" description="Interaction with RAP1B" evidence="12">
    <location>
        <begin position="430"/>
        <end position="452"/>
    </location>
</feature>
<feature type="splice variant" id="VSP_015800" description="In isoform 2." evidence="19">
    <location>
        <begin position="1"/>
        <end position="207"/>
    </location>
</feature>
<feature type="splice variant" id="VSP_043327" description="In isoform 3." evidence="18">
    <location>
        <begin position="283"/>
        <end position="330"/>
    </location>
</feature>
<feature type="sequence variant" id="VAR_023573" description="In CCM1." evidence="6">
    <original>F</original>
    <variation>S</variation>
    <location>
        <position position="97"/>
    </location>
</feature>
<feature type="sequence variant" id="VAR_023574" description="In CCM1." evidence="6">
    <original>K</original>
    <variation>E</variation>
    <location>
        <position position="569"/>
    </location>
</feature>
<feature type="mutagenesis site" description="Reduces interaction with microtubules, but not with ITGB1BP1." evidence="7">
    <original>KKRK</original>
    <variation>AAAA</variation>
    <location>
        <begin position="47"/>
        <end position="50"/>
    </location>
</feature>
<feature type="mutagenesis site" description="Strongly reduces ITGB1BP1 binding; when associated with D-182." evidence="14">
    <original>A</original>
    <variation>D</variation>
    <location>
        <position position="176"/>
    </location>
</feature>
<feature type="mutagenesis site" description="Strongly reduces ITGB1BP1 binding; when associated with A-179." evidence="14">
    <original>R</original>
    <variation>A</variation>
    <location>
        <position position="179"/>
    </location>
</feature>
<feature type="mutagenesis site" description="Strongly reduces ITGB1BP1 binding; when associated with D-176." evidence="14">
    <original>P</original>
    <variation>D</variation>
    <location>
        <position position="182"/>
    </location>
</feature>
<feature type="mutagenesis site" description="Strongly reduces ITGB1BP1 binding; when associated with A-179." evidence="14">
    <original>R</original>
    <variation>A</variation>
    <location>
        <position position="185"/>
    </location>
</feature>
<feature type="mutagenesis site" description="Reduces interaction with ITGB1BP1." evidence="7">
    <original>NPAY</original>
    <variation>APAA</variation>
    <location>
        <begin position="192"/>
        <end position="195"/>
    </location>
</feature>
<feature type="mutagenesis site" description="Reduces ITGB1BP1 binding; when associated with A-195." evidence="4 5 14">
    <original>N</original>
    <variation>A</variation>
    <location>
        <position position="192"/>
    </location>
</feature>
<feature type="mutagenesis site" description="Reduces ITGB1BP1 binding; when associated with A-192." evidence="4 5 14">
    <original>Y</original>
    <variation>A</variation>
    <location>
        <position position="195"/>
    </location>
</feature>
<feature type="mutagenesis site" description="Impairs interaction with RAP1B." evidence="12">
    <original>S</original>
    <variation>E</variation>
    <location>
        <position position="430"/>
    </location>
</feature>
<feature type="mutagenesis site" description="Impairs interaction with RAP1B." evidence="12">
    <original>R</original>
    <variation>E</variation>
    <location>
        <position position="432"/>
    </location>
</feature>
<feature type="mutagenesis site" description="40-fold-reduced affinity for Rap1A." evidence="11 12">
    <original>R</original>
    <variation>E</variation>
    <location>
        <position position="452"/>
    </location>
</feature>
<feature type="mutagenesis site" description="Impairs interaction with RAP1B." evidence="11 12">
    <original>R</original>
    <variation>E</variation>
    <location>
        <position position="452"/>
    </location>
</feature>
<feature type="mutagenesis site" description="Strongly reduced affinity for HEG1; when associated with A-721." evidence="13">
    <original>L</original>
    <variation>A</variation>
    <location>
        <position position="717"/>
    </location>
</feature>
<feature type="mutagenesis site" description="Strongly reduced affinity for HEG1; when associated with A-717." evidence="13">
    <original>L</original>
    <variation>A</variation>
    <location>
        <position position="721"/>
    </location>
</feature>
<feature type="sequence conflict" description="In Ref. 5; AAQ94072." evidence="20" ref="5">
    <original>I</original>
    <variation>T</variation>
    <location>
        <position position="138"/>
    </location>
</feature>
<feature type="sequence conflict" description="In Ref. 1; AAB58582." evidence="20" ref="1">
    <original>F</original>
    <variation>G</variation>
    <location>
        <position position="234"/>
    </location>
</feature>
<feature type="sequence conflict" description="In Ref. 1; AAB58582, 2; AAG47774 and 5; AAQ94072." evidence="20" ref="1 2 5">
    <original>P</original>
    <variation>A</variation>
    <location>
        <position position="731"/>
    </location>
</feature>
<feature type="strand" evidence="22">
    <location>
        <begin position="9"/>
        <end position="17"/>
    </location>
</feature>
<feature type="helix" evidence="22">
    <location>
        <begin position="30"/>
        <end position="32"/>
    </location>
</feature>
<feature type="strand" evidence="22">
    <location>
        <begin position="33"/>
        <end position="39"/>
    </location>
</feature>
<feature type="strand" evidence="22">
    <location>
        <begin position="54"/>
        <end position="57"/>
    </location>
</feature>
<feature type="helix" evidence="22">
    <location>
        <begin position="64"/>
        <end position="75"/>
    </location>
</feature>
<feature type="strand" evidence="22">
    <location>
        <begin position="92"/>
        <end position="98"/>
    </location>
</feature>
<feature type="strand" evidence="22">
    <location>
        <begin position="107"/>
        <end position="114"/>
    </location>
</feature>
<feature type="strand" evidence="22">
    <location>
        <begin position="131"/>
        <end position="134"/>
    </location>
</feature>
<feature type="helix" evidence="22">
    <location>
        <begin position="135"/>
        <end position="141"/>
    </location>
</feature>
<feature type="helix" evidence="22">
    <location>
        <begin position="151"/>
        <end position="170"/>
    </location>
</feature>
<feature type="helix" evidence="22">
    <location>
        <begin position="173"/>
        <end position="178"/>
    </location>
</feature>
<feature type="helix" evidence="25">
    <location>
        <begin position="182"/>
        <end position="185"/>
    </location>
</feature>
<feature type="strand" evidence="25">
    <location>
        <begin position="186"/>
        <end position="191"/>
    </location>
</feature>
<feature type="helix" evidence="25">
    <location>
        <begin position="193"/>
        <end position="195"/>
    </location>
</feature>
<feature type="turn" evidence="26">
    <location>
        <begin position="232"/>
        <end position="235"/>
    </location>
</feature>
<feature type="helix" evidence="27">
    <location>
        <begin position="291"/>
        <end position="297"/>
    </location>
</feature>
<feature type="helix" evidence="27">
    <location>
        <begin position="301"/>
        <end position="309"/>
    </location>
</feature>
<feature type="helix" evidence="27">
    <location>
        <begin position="324"/>
        <end position="330"/>
    </location>
</feature>
<feature type="helix" evidence="27">
    <location>
        <begin position="334"/>
        <end position="342"/>
    </location>
</feature>
<feature type="helix" evidence="27">
    <location>
        <begin position="358"/>
        <end position="364"/>
    </location>
</feature>
<feature type="helix" evidence="27">
    <location>
        <begin position="368"/>
        <end position="376"/>
    </location>
</feature>
<feature type="helix" evidence="27">
    <location>
        <begin position="392"/>
        <end position="399"/>
    </location>
</feature>
<feature type="helix" evidence="27">
    <location>
        <begin position="404"/>
        <end position="412"/>
    </location>
</feature>
<feature type="strand" evidence="27">
    <location>
        <begin position="415"/>
        <end position="417"/>
    </location>
</feature>
<feature type="strand" evidence="23">
    <location>
        <begin position="421"/>
        <end position="425"/>
    </location>
</feature>
<feature type="strand" evidence="23">
    <location>
        <begin position="431"/>
        <end position="435"/>
    </location>
</feature>
<feature type="helix" evidence="23">
    <location>
        <begin position="439"/>
        <end position="441"/>
    </location>
</feature>
<feature type="helix" evidence="23">
    <location>
        <begin position="444"/>
        <end position="449"/>
    </location>
</feature>
<feature type="helix" evidence="23">
    <location>
        <begin position="455"/>
        <end position="458"/>
    </location>
</feature>
<feature type="strand" evidence="23">
    <location>
        <begin position="461"/>
        <end position="467"/>
    </location>
</feature>
<feature type="strand" evidence="23">
    <location>
        <begin position="470"/>
        <end position="473"/>
    </location>
</feature>
<feature type="helix" evidence="23">
    <location>
        <begin position="480"/>
        <end position="485"/>
    </location>
</feature>
<feature type="helix" evidence="23">
    <location>
        <begin position="487"/>
        <end position="494"/>
    </location>
</feature>
<feature type="helix" evidence="23">
    <location>
        <begin position="499"/>
        <end position="501"/>
    </location>
</feature>
<feature type="strand" evidence="23">
    <location>
        <begin position="505"/>
        <end position="510"/>
    </location>
</feature>
<feature type="helix" evidence="23">
    <location>
        <begin position="516"/>
        <end position="519"/>
    </location>
</feature>
<feature type="helix" evidence="23">
    <location>
        <begin position="525"/>
        <end position="541"/>
    </location>
</feature>
<feature type="helix" evidence="23">
    <location>
        <begin position="548"/>
        <end position="563"/>
    </location>
</feature>
<feature type="helix" evidence="23">
    <location>
        <begin position="568"/>
        <end position="571"/>
    </location>
</feature>
<feature type="strand" evidence="23">
    <location>
        <begin position="572"/>
        <end position="574"/>
    </location>
</feature>
<feature type="helix" evidence="23">
    <location>
        <begin position="578"/>
        <end position="581"/>
    </location>
</feature>
<feature type="turn" evidence="23">
    <location>
        <begin position="582"/>
        <end position="584"/>
    </location>
</feature>
<feature type="helix" evidence="23">
    <location>
        <begin position="587"/>
        <end position="589"/>
    </location>
</feature>
<feature type="turn" evidence="23">
    <location>
        <begin position="590"/>
        <end position="593"/>
    </location>
</feature>
<feature type="helix" evidence="23">
    <location>
        <begin position="594"/>
        <end position="596"/>
    </location>
</feature>
<feature type="helix" evidence="23">
    <location>
        <begin position="598"/>
        <end position="610"/>
    </location>
</feature>
<feature type="strand" evidence="28">
    <location>
        <begin position="612"/>
        <end position="614"/>
    </location>
</feature>
<feature type="helix" evidence="23">
    <location>
        <begin position="618"/>
        <end position="629"/>
    </location>
</feature>
<feature type="turn" evidence="23">
    <location>
        <begin position="633"/>
        <end position="636"/>
    </location>
</feature>
<feature type="strand" evidence="23">
    <location>
        <begin position="638"/>
        <end position="645"/>
    </location>
</feature>
<feature type="turn" evidence="24">
    <location>
        <begin position="650"/>
        <end position="652"/>
    </location>
</feature>
<feature type="strand" evidence="23">
    <location>
        <begin position="655"/>
        <end position="662"/>
    </location>
</feature>
<feature type="strand" evidence="23">
    <location>
        <begin position="664"/>
        <end position="671"/>
    </location>
</feature>
<feature type="turn" evidence="23">
    <location>
        <begin position="672"/>
        <end position="674"/>
    </location>
</feature>
<feature type="strand" evidence="23">
    <location>
        <begin position="677"/>
        <end position="682"/>
    </location>
</feature>
<feature type="strand" evidence="23">
    <location>
        <begin position="685"/>
        <end position="690"/>
    </location>
</feature>
<feature type="strand" evidence="23">
    <location>
        <begin position="694"/>
        <end position="701"/>
    </location>
</feature>
<feature type="turn" evidence="23">
    <location>
        <begin position="702"/>
        <end position="705"/>
    </location>
</feature>
<feature type="strand" evidence="23">
    <location>
        <begin position="706"/>
        <end position="711"/>
    </location>
</feature>
<feature type="helix" evidence="23">
    <location>
        <begin position="715"/>
        <end position="728"/>
    </location>
</feature>
<comment type="function">
    <text evidence="1 4 7 8 9 10 11 14 15">Component of the CCM signaling pathway which is a crucial regulator of heart and vessel formation and integrity (By similarity). Negative regulator of angiogenesis. Inhibits endothelial proliferation, apoptosis, migration, lumen formation and sprouting angiogenesis in primary endothelial cells. Promotes AKT phosphorylation in a NOTCH-dependent and independent manner, and inhibits ERK1/2 phosphorylation indirectly through activation of the DELTA-NOTCH cascade. Acts in concert with CDH5 to establish and maintain correct endothelial cell polarity and vascular lumen and these effects are mediated by recruitment and activation of the Par polarity complex and RAP1B. Required for the localization of phosphorylated PRKCZ, PARD3, TIAM1 and RAP1B to the cell junction, and cell junction stabilization. Plays a role in integrin signaling via its interaction with ITGB1BP1; this prevents the interaction between ITGB1 and ITGB1BP1. Microtubule-associated protein that binds to phosphatidylinositol 4,5-bisphosphate (PIP2)-containing membranes in a GTP-bound RAP1-dependent manner. Plays an important role in the maintenance of the intracellular reactive oxygen species (ROS) homeostasis to prevent oxidative cellular damage. Regulates the homeostasis of intracellular ROS through an antioxidant pathway involving FOXO1 and SOD2. Facilitates the down-regulation of cyclin-D1 (CCND1) levels required for cell transition from proliferative growth to quiescence by preventing the accumulation of intracellular ROS through the modulation of FOXO1 and SOD2 levels. May play a role in the regulation of macroautophagy through the down-regulation of the mTOR pathway (PubMed:26417067).</text>
</comment>
<comment type="subunit">
    <text evidence="4 5 7 8 11 12 13 14 17">Interacts with CDH5 (PubMed:20332120). Found in a complex, at least composed of ITGB1BP1, KRIT1 and RAP1A. Interacts (via C-terminus FERM domain) with RAP1A (active GTP-bound form preferentially); the interaction does not induce the opening conformation of KRIT1. Interacts (via FERM domain) with RAP1B. Interacts (via N-terminus NPXY motif) with ITGB1BP1; the interaction induces the opening conformation of KRIT1 and competes with ITGB1 for ITGB1BP1 interaction. Interacts with HEG1 and CCM2; greatly facilitates CCM2-binding to HEG1. Associates (via N-terminus and C-terminus regions) with microtubules; the interaction is inhibited in presence of ITGB1BP1 and active GTP-bound RAP1A.</text>
</comment>
<comment type="interaction">
    <interactant intactId="EBI-1573121">
        <id>O00522</id>
    </interactant>
    <interactant intactId="EBI-1573056">
        <id>Q9BSQ5</id>
        <label>CCM2</label>
    </interactant>
    <organismsDiffer>false</organismsDiffer>
    <experiments>17</experiments>
</comment>
<comment type="interaction">
    <interactant intactId="EBI-1573121">
        <id>O00522</id>
    </interactant>
    <interactant intactId="EBI-16157769">
        <id>Q9BSQ5-1</id>
        <label>CCM2</label>
    </interactant>
    <organismsDiffer>false</organismsDiffer>
    <experiments>2</experiments>
</comment>
<comment type="interaction">
    <interactant intactId="EBI-1573121">
        <id>O00522</id>
    </interactant>
    <interactant intactId="EBI-12734419">
        <id>Q9ULI3</id>
        <label>HEG1</label>
    </interactant>
    <organismsDiffer>false</organismsDiffer>
    <experiments>6</experiments>
</comment>
<comment type="interaction">
    <interactant intactId="EBI-1573121">
        <id>O00522</id>
    </interactant>
    <interactant intactId="EBI-2127319">
        <id>O14713</id>
        <label>ITGB1BP1</label>
    </interactant>
    <organismsDiffer>false</organismsDiffer>
    <experiments>5</experiments>
</comment>
<comment type="interaction">
    <interactant intactId="EBI-1573121">
        <id>O00522</id>
    </interactant>
    <interactant intactId="EBI-473850">
        <id>P61086</id>
        <label>UBE2K</label>
    </interactant>
    <organismsDiffer>false</organismsDiffer>
    <experiments>3</experiments>
</comment>
<comment type="subcellular location">
    <subcellularLocation>
        <location>Cytoplasm</location>
        <location>Cytoskeleton</location>
    </subcellularLocation>
    <subcellularLocation>
        <location>Cell membrane</location>
        <topology>Peripheral membrane protein</topology>
    </subcellularLocation>
    <subcellularLocation>
        <location>Cell junction</location>
    </subcellularLocation>
    <text>KRIT1 and CDH5 reciprocally regulate their localization to endothelial cell-cell junctions. Association with RAP1 relocalizes KRIT1 from microtubules to cell junction membranes. Translocates from the cytoplasm along microtubules to the cell membrane in a ITGB1BP1-dependent manner.</text>
</comment>
<comment type="alternative products">
    <event type="alternative splicing"/>
    <isoform>
        <id>O00522-1</id>
        <name>1</name>
        <sequence type="displayed"/>
    </isoform>
    <isoform>
        <id>O00522-2</id>
        <name>2</name>
        <sequence type="described" ref="VSP_015800"/>
    </isoform>
    <isoform>
        <id>O00522-3</id>
        <name>3</name>
        <sequence type="described" ref="VSP_043327"/>
    </isoform>
</comment>
<comment type="tissue specificity">
    <text evidence="17">Low levels in brain. Very weak expression found in heart and muscle.</text>
</comment>
<comment type="domain">
    <text evidence="14">The FERM domain mediates binding to RAP1A and RAP1B and is necessary for binding to phosphatidylinositol 4,5-bisphosphate (PIP2).</text>
</comment>
<comment type="domain">
    <text evidence="14">The N-terminal domain has structural similarity to the nudix hydrolase domain, despite the absence of a nudix box and low sequence similarity with nudix hydrolase domains. The N-terminus and the C-terminus part associate together via the NPAY binding motif and adopt a lose conformation that is disrupted by ITGB1BP1, but not by RAP1A.</text>
</comment>
<comment type="domain">
    <text evidence="16">Contains 4 ANK repeats that precede the FERM domain.</text>
</comment>
<comment type="disease" evidence="6">
    <disease id="DI-00255">
        <name>Cerebral cavernous malformations 1</name>
        <acronym>CCM1</acronym>
        <description>A form of cerebral cavernous malformations, a congenital vascular anomaly of the central nervous system that can result in hemorrhagic stroke, seizures, recurrent headaches, and focal neurologic deficits. The lesions are characterized by grossly enlarged blood vessels consisting of a single layer of endothelium and without any intervening neural tissue, ranging in diameter from a few millimeters to several centimeters. CCM1 inheritance is autosomal dominant.</description>
        <dbReference type="MIM" id="116860"/>
    </disease>
    <text>The disease is caused by variants affecting the gene represented in this entry.</text>
</comment>
<keyword id="KW-0002">3D-structure</keyword>
<keyword id="KW-0025">Alternative splicing</keyword>
<keyword id="KW-0037">Angiogenesis</keyword>
<keyword id="KW-0040">ANK repeat</keyword>
<keyword id="KW-0965">Cell junction</keyword>
<keyword id="KW-1003">Cell membrane</keyword>
<keyword id="KW-0963">Cytoplasm</keyword>
<keyword id="KW-0206">Cytoskeleton</keyword>
<keyword id="KW-0225">Disease variant</keyword>
<keyword id="KW-0472">Membrane</keyword>
<keyword id="KW-1267">Proteomics identification</keyword>
<keyword id="KW-1185">Reference proteome</keyword>
<keyword id="KW-0677">Repeat</keyword>
<name>KRIT1_HUMAN</name>
<organism>
    <name type="scientific">Homo sapiens</name>
    <name type="common">Human</name>
    <dbReference type="NCBI Taxonomy" id="9606"/>
    <lineage>
        <taxon>Eukaryota</taxon>
        <taxon>Metazoa</taxon>
        <taxon>Chordata</taxon>
        <taxon>Craniata</taxon>
        <taxon>Vertebrata</taxon>
        <taxon>Euteleostomi</taxon>
        <taxon>Mammalia</taxon>
        <taxon>Eutheria</taxon>
        <taxon>Euarchontoglires</taxon>
        <taxon>Primates</taxon>
        <taxon>Haplorrhini</taxon>
        <taxon>Catarrhini</taxon>
        <taxon>Hominidae</taxon>
        <taxon>Homo</taxon>
    </lineage>
</organism>